<sequence>MPPYRSRTTTHGRNMAGARGLWRATGMKDEDFGKPIIAVVNSFTQFVPGHVHLKDLGQLVAREIESAGGVAKEFNTIAVDDGIAMGHDGMLYSLPSRELIADSVEYMVNAHCADAMVCISNCDKITPGMLMAALRLNIPVVFVSGGPMEAGKVVWEDSVKKLDLVDAMVAAADDHYTDEQVKAIERSACPTCGSCSGMFTANSMNCLTEALGLSLPGNGSTLATHADRKRLFVEAGHLIVDLARRYYEQDDESVLPRSIATFSAFENAMTLDIAMGGSTNTVLHLLAAAQEAEIDFTMADIDRLSRRVPVLCKVAPAVSSVHMEDVHHAGGIMGILGQLDNAGLLTTSIPTVHSETLAKALDHWDVTRTNSEMVHKFYSAAPGGVPTQVAFSQERRFDKVDTDREKGVIRSKEHAFSQDGGLAVLYGNLAEDGCIVKTAGVDDSILKFSGPARIFESQDSAVLGILNGKIKPGDIVLIRYEGPRGGPGMQEMLYPTSYLKSKGLGKACALITDGRFSGGSSGLSIGHVSPEAAEGGTIGLVREGDIIDIDIPNRKIHLAVDDATLAERRAEQDAAGWKPAEERKRKISTALKAYAAMATSAARGAVRKLPD</sequence>
<feature type="chain" id="PRO_0000225375" description="Dihydroxy-acid dehydratase">
    <location>
        <begin position="1"/>
        <end position="611"/>
    </location>
</feature>
<feature type="active site" description="Proton acceptor" evidence="1">
    <location>
        <position position="517"/>
    </location>
</feature>
<feature type="binding site" evidence="1">
    <location>
        <position position="81"/>
    </location>
    <ligand>
        <name>Mg(2+)</name>
        <dbReference type="ChEBI" id="CHEBI:18420"/>
    </ligand>
</feature>
<feature type="binding site" evidence="1">
    <location>
        <position position="122"/>
    </location>
    <ligand>
        <name>[2Fe-2S] cluster</name>
        <dbReference type="ChEBI" id="CHEBI:190135"/>
    </ligand>
</feature>
<feature type="binding site" evidence="1">
    <location>
        <position position="123"/>
    </location>
    <ligand>
        <name>Mg(2+)</name>
        <dbReference type="ChEBI" id="CHEBI:18420"/>
    </ligand>
</feature>
<feature type="binding site" description="via carbamate group" evidence="1">
    <location>
        <position position="124"/>
    </location>
    <ligand>
        <name>Mg(2+)</name>
        <dbReference type="ChEBI" id="CHEBI:18420"/>
    </ligand>
</feature>
<feature type="binding site" evidence="1">
    <location>
        <position position="195"/>
    </location>
    <ligand>
        <name>[2Fe-2S] cluster</name>
        <dbReference type="ChEBI" id="CHEBI:190135"/>
    </ligand>
</feature>
<feature type="binding site" evidence="1">
    <location>
        <position position="491"/>
    </location>
    <ligand>
        <name>Mg(2+)</name>
        <dbReference type="ChEBI" id="CHEBI:18420"/>
    </ligand>
</feature>
<feature type="modified residue" description="N6-carboxylysine" evidence="1">
    <location>
        <position position="124"/>
    </location>
</feature>
<gene>
    <name evidence="1" type="primary">ilvD</name>
    <name type="ordered locus">BruAb1_0096</name>
</gene>
<keyword id="KW-0001">2Fe-2S</keyword>
<keyword id="KW-0028">Amino-acid biosynthesis</keyword>
<keyword id="KW-0100">Branched-chain amino acid biosynthesis</keyword>
<keyword id="KW-0408">Iron</keyword>
<keyword id="KW-0411">Iron-sulfur</keyword>
<keyword id="KW-0456">Lyase</keyword>
<keyword id="KW-0460">Magnesium</keyword>
<keyword id="KW-0479">Metal-binding</keyword>
<accession>Q57FS2</accession>
<protein>
    <recommendedName>
        <fullName evidence="1">Dihydroxy-acid dehydratase</fullName>
        <shortName evidence="1">DAD</shortName>
        <ecNumber evidence="1">4.2.1.9</ecNumber>
    </recommendedName>
</protein>
<reference key="1">
    <citation type="journal article" date="2005" name="J. Bacteriol.">
        <title>Completion of the genome sequence of Brucella abortus and comparison to the highly similar genomes of Brucella melitensis and Brucella suis.</title>
        <authorList>
            <person name="Halling S.M."/>
            <person name="Peterson-Burch B.D."/>
            <person name="Bricker B.J."/>
            <person name="Zuerner R.L."/>
            <person name="Qing Z."/>
            <person name="Li L.-L."/>
            <person name="Kapur V."/>
            <person name="Alt D.P."/>
            <person name="Olsen S.C."/>
        </authorList>
    </citation>
    <scope>NUCLEOTIDE SEQUENCE [LARGE SCALE GENOMIC DNA]</scope>
    <source>
        <strain>9-941</strain>
    </source>
</reference>
<dbReference type="EC" id="4.2.1.9" evidence="1"/>
<dbReference type="EMBL" id="AE017223">
    <property type="protein sequence ID" value="AAX73512.1"/>
    <property type="molecule type" value="Genomic_DNA"/>
</dbReference>
<dbReference type="RefSeq" id="WP_002965347.1">
    <property type="nucleotide sequence ID" value="NC_006932.1"/>
</dbReference>
<dbReference type="SMR" id="Q57FS2"/>
<dbReference type="EnsemblBacteria" id="AAX73512">
    <property type="protein sequence ID" value="AAX73512"/>
    <property type="gene ID" value="BruAb1_0096"/>
</dbReference>
<dbReference type="GeneID" id="93017425"/>
<dbReference type="KEGG" id="bmb:BruAb1_0096"/>
<dbReference type="HOGENOM" id="CLU_014271_4_2_5"/>
<dbReference type="UniPathway" id="UPA00047">
    <property type="reaction ID" value="UER00057"/>
</dbReference>
<dbReference type="UniPathway" id="UPA00049">
    <property type="reaction ID" value="UER00061"/>
</dbReference>
<dbReference type="PRO" id="PR:Q57FS2"/>
<dbReference type="Proteomes" id="UP000000540">
    <property type="component" value="Chromosome I"/>
</dbReference>
<dbReference type="GO" id="GO:0005829">
    <property type="term" value="C:cytosol"/>
    <property type="evidence" value="ECO:0007669"/>
    <property type="project" value="TreeGrafter"/>
</dbReference>
<dbReference type="GO" id="GO:0051537">
    <property type="term" value="F:2 iron, 2 sulfur cluster binding"/>
    <property type="evidence" value="ECO:0007669"/>
    <property type="project" value="UniProtKB-UniRule"/>
</dbReference>
<dbReference type="GO" id="GO:0004160">
    <property type="term" value="F:dihydroxy-acid dehydratase activity"/>
    <property type="evidence" value="ECO:0007669"/>
    <property type="project" value="UniProtKB-UniRule"/>
</dbReference>
<dbReference type="GO" id="GO:0000287">
    <property type="term" value="F:magnesium ion binding"/>
    <property type="evidence" value="ECO:0007669"/>
    <property type="project" value="UniProtKB-UniRule"/>
</dbReference>
<dbReference type="GO" id="GO:0009097">
    <property type="term" value="P:isoleucine biosynthetic process"/>
    <property type="evidence" value="ECO:0007669"/>
    <property type="project" value="UniProtKB-UniRule"/>
</dbReference>
<dbReference type="GO" id="GO:0009099">
    <property type="term" value="P:L-valine biosynthetic process"/>
    <property type="evidence" value="ECO:0007669"/>
    <property type="project" value="UniProtKB-UniRule"/>
</dbReference>
<dbReference type="FunFam" id="3.50.30.80:FF:000001">
    <property type="entry name" value="Dihydroxy-acid dehydratase"/>
    <property type="match status" value="1"/>
</dbReference>
<dbReference type="Gene3D" id="3.50.30.80">
    <property type="entry name" value="IlvD/EDD C-terminal domain-like"/>
    <property type="match status" value="1"/>
</dbReference>
<dbReference type="HAMAP" id="MF_00012">
    <property type="entry name" value="IlvD"/>
    <property type="match status" value="1"/>
</dbReference>
<dbReference type="InterPro" id="IPR042096">
    <property type="entry name" value="Dihydro-acid_dehy_C"/>
</dbReference>
<dbReference type="InterPro" id="IPR004404">
    <property type="entry name" value="DihydroxyA_deHydtase"/>
</dbReference>
<dbReference type="InterPro" id="IPR020558">
    <property type="entry name" value="DiOHA_6PGluconate_deHydtase_CS"/>
</dbReference>
<dbReference type="InterPro" id="IPR056740">
    <property type="entry name" value="ILV_EDD_C"/>
</dbReference>
<dbReference type="InterPro" id="IPR000581">
    <property type="entry name" value="ILV_EDD_N"/>
</dbReference>
<dbReference type="InterPro" id="IPR037237">
    <property type="entry name" value="IlvD/EDD_N"/>
</dbReference>
<dbReference type="NCBIfam" id="TIGR00110">
    <property type="entry name" value="ilvD"/>
    <property type="match status" value="1"/>
</dbReference>
<dbReference type="NCBIfam" id="NF009103">
    <property type="entry name" value="PRK12448.1"/>
    <property type="match status" value="1"/>
</dbReference>
<dbReference type="PANTHER" id="PTHR43661">
    <property type="entry name" value="D-XYLONATE DEHYDRATASE"/>
    <property type="match status" value="1"/>
</dbReference>
<dbReference type="PANTHER" id="PTHR43661:SF3">
    <property type="entry name" value="D-XYLONATE DEHYDRATASE YAGF-RELATED"/>
    <property type="match status" value="1"/>
</dbReference>
<dbReference type="Pfam" id="PF24877">
    <property type="entry name" value="ILV_EDD_C"/>
    <property type="match status" value="1"/>
</dbReference>
<dbReference type="Pfam" id="PF00920">
    <property type="entry name" value="ILVD_EDD_N"/>
    <property type="match status" value="1"/>
</dbReference>
<dbReference type="SUPFAM" id="SSF143975">
    <property type="entry name" value="IlvD/EDD N-terminal domain-like"/>
    <property type="match status" value="1"/>
</dbReference>
<dbReference type="SUPFAM" id="SSF52016">
    <property type="entry name" value="LeuD/IlvD-like"/>
    <property type="match status" value="1"/>
</dbReference>
<dbReference type="PROSITE" id="PS00886">
    <property type="entry name" value="ILVD_EDD_1"/>
    <property type="match status" value="1"/>
</dbReference>
<dbReference type="PROSITE" id="PS00887">
    <property type="entry name" value="ILVD_EDD_2"/>
    <property type="match status" value="1"/>
</dbReference>
<organism>
    <name type="scientific">Brucella abortus biovar 1 (strain 9-941)</name>
    <dbReference type="NCBI Taxonomy" id="262698"/>
    <lineage>
        <taxon>Bacteria</taxon>
        <taxon>Pseudomonadati</taxon>
        <taxon>Pseudomonadota</taxon>
        <taxon>Alphaproteobacteria</taxon>
        <taxon>Hyphomicrobiales</taxon>
        <taxon>Brucellaceae</taxon>
        <taxon>Brucella/Ochrobactrum group</taxon>
        <taxon>Brucella</taxon>
    </lineage>
</organism>
<proteinExistence type="inferred from homology"/>
<comment type="function">
    <text evidence="1">Functions in the biosynthesis of branched-chain amino acids. Catalyzes the dehydration of (2R,3R)-2,3-dihydroxy-3-methylpentanoate (2,3-dihydroxy-3-methylvalerate) into 2-oxo-3-methylpentanoate (2-oxo-3-methylvalerate) and of (2R)-2,3-dihydroxy-3-methylbutanoate (2,3-dihydroxyisovalerate) into 2-oxo-3-methylbutanoate (2-oxoisovalerate), the penultimate precursor to L-isoleucine and L-valine, respectively.</text>
</comment>
<comment type="catalytic activity">
    <reaction evidence="1">
        <text>(2R)-2,3-dihydroxy-3-methylbutanoate = 3-methyl-2-oxobutanoate + H2O</text>
        <dbReference type="Rhea" id="RHEA:24809"/>
        <dbReference type="ChEBI" id="CHEBI:11851"/>
        <dbReference type="ChEBI" id="CHEBI:15377"/>
        <dbReference type="ChEBI" id="CHEBI:49072"/>
        <dbReference type="EC" id="4.2.1.9"/>
    </reaction>
    <physiologicalReaction direction="left-to-right" evidence="1">
        <dbReference type="Rhea" id="RHEA:24810"/>
    </physiologicalReaction>
</comment>
<comment type="catalytic activity">
    <reaction evidence="1">
        <text>(2R,3R)-2,3-dihydroxy-3-methylpentanoate = (S)-3-methyl-2-oxopentanoate + H2O</text>
        <dbReference type="Rhea" id="RHEA:27694"/>
        <dbReference type="ChEBI" id="CHEBI:15377"/>
        <dbReference type="ChEBI" id="CHEBI:35146"/>
        <dbReference type="ChEBI" id="CHEBI:49258"/>
        <dbReference type="EC" id="4.2.1.9"/>
    </reaction>
    <physiologicalReaction direction="left-to-right" evidence="1">
        <dbReference type="Rhea" id="RHEA:27695"/>
    </physiologicalReaction>
</comment>
<comment type="cofactor">
    <cofactor evidence="1">
        <name>[2Fe-2S] cluster</name>
        <dbReference type="ChEBI" id="CHEBI:190135"/>
    </cofactor>
    <text evidence="1">Binds 1 [2Fe-2S] cluster per subunit. This cluster acts as a Lewis acid cofactor.</text>
</comment>
<comment type="cofactor">
    <cofactor evidence="1">
        <name>Mg(2+)</name>
        <dbReference type="ChEBI" id="CHEBI:18420"/>
    </cofactor>
</comment>
<comment type="pathway">
    <text evidence="1">Amino-acid biosynthesis; L-isoleucine biosynthesis; L-isoleucine from 2-oxobutanoate: step 3/4.</text>
</comment>
<comment type="pathway">
    <text evidence="1">Amino-acid biosynthesis; L-valine biosynthesis; L-valine from pyruvate: step 3/4.</text>
</comment>
<comment type="subunit">
    <text evidence="1">Homodimer.</text>
</comment>
<comment type="similarity">
    <text evidence="1">Belongs to the IlvD/Edd family.</text>
</comment>
<evidence type="ECO:0000255" key="1">
    <source>
        <dbReference type="HAMAP-Rule" id="MF_00012"/>
    </source>
</evidence>
<name>ILVD_BRUAB</name>